<sequence>WAQVVSQENLPNTMTMLPFTPNSESPSTSEALSTYSSIATVPVTEDPKESISPWGQTTAPASSIPLGTPELSSFFFTSAGASGNTPVPELTTSQEVSTEASLVLFPKSSGVASDPPVTITNPATSSAVASTSLETFKGTSAPPVTVTSSTMTSGPFVATTVSSETSGPPVTMATGSLGPSKETHGLSATIATSSGESSSVAGGTPVFSTKISTTSTPNPITTVPPRPGSSGMLLVSMLIALTVVLVLVALLLLWRQRQKRRTGALTLSRGGKRNGTVDAWAGPARVPDEEATTASGSGGNKSSGAPETDGSGQRPTLTTFFSRRKSRQGSVALEELKPGTGPNLKGEEEPLVGSEDEAVETPTSDGPQAKDGAAPQSL</sequence>
<name>LEUK_RAT</name>
<organism>
    <name type="scientific">Rattus norvegicus</name>
    <name type="common">Rat</name>
    <dbReference type="NCBI Taxonomy" id="10116"/>
    <lineage>
        <taxon>Eukaryota</taxon>
        <taxon>Metazoa</taxon>
        <taxon>Chordata</taxon>
        <taxon>Craniata</taxon>
        <taxon>Vertebrata</taxon>
        <taxon>Euteleostomi</taxon>
        <taxon>Mammalia</taxon>
        <taxon>Eutheria</taxon>
        <taxon>Euarchontoglires</taxon>
        <taxon>Glires</taxon>
        <taxon>Rodentia</taxon>
        <taxon>Myomorpha</taxon>
        <taxon>Muroidea</taxon>
        <taxon>Muridae</taxon>
        <taxon>Murinae</taxon>
        <taxon>Rattus</taxon>
    </lineage>
</organism>
<keyword id="KW-0966">Cell projection</keyword>
<keyword id="KW-0325">Glycoprotein</keyword>
<keyword id="KW-0472">Membrane</keyword>
<keyword id="KW-0539">Nucleus</keyword>
<keyword id="KW-0597">Phosphoprotein</keyword>
<keyword id="KW-1185">Reference proteome</keyword>
<keyword id="KW-0732">Signal</keyword>
<keyword id="KW-0812">Transmembrane</keyword>
<keyword id="KW-1133">Transmembrane helix</keyword>
<keyword id="KW-0832">Ubl conjugation</keyword>
<evidence type="ECO:0000250" key="1">
    <source>
        <dbReference type="UniProtKB" id="P15702"/>
    </source>
</evidence>
<evidence type="ECO:0000250" key="2">
    <source>
        <dbReference type="UniProtKB" id="P16150"/>
    </source>
</evidence>
<evidence type="ECO:0000255" key="3"/>
<evidence type="ECO:0000256" key="4">
    <source>
        <dbReference type="SAM" id="MobiDB-lite"/>
    </source>
</evidence>
<evidence type="ECO:0000269" key="5">
    <source>
    </source>
</evidence>
<evidence type="ECO:0000269" key="6">
    <source>
    </source>
</evidence>
<evidence type="ECO:0007744" key="7">
    <source>
    </source>
</evidence>
<reference key="1">
    <citation type="journal article" date="1987" name="EMBO J.">
        <title>The sequence of rat leukosialin (W3/13 antigen) reveals a molecule with O-linked glycosylation of one third of its extracellular amino acids.</title>
        <authorList>
            <person name="Killeen N."/>
            <person name="Barclay A.N."/>
            <person name="Willis A.C."/>
            <person name="Williams A.F."/>
        </authorList>
    </citation>
    <scope>NUCLEOTIDE SEQUENCE [MRNA]</scope>
    <source>
        <tissue>Thymocyte</tissue>
    </source>
</reference>
<reference key="2">
    <citation type="journal article" date="1998" name="J. Cell Biol.">
        <title>Ezrin/radixin/moesin (ERM) proteins bind to a positively charged amino acid cluster in the juxta-membrane cytoplasmic domain of CD44, CD43, and ICAM-2.</title>
        <authorList>
            <person name="Yonemura S."/>
            <person name="Hirao M."/>
            <person name="Doi Y."/>
            <person name="Takahashi N."/>
            <person name="Kondo T."/>
            <person name="Tsukita S."/>
            <person name="Tsukita S."/>
        </authorList>
    </citation>
    <scope>INTERACTION WITH EZR; MSN AND RDX</scope>
    <scope>SUBCELLULAR LOCATION</scope>
    <scope>MUTAGENESIS OF 259-LYS--ARG-261</scope>
</reference>
<reference key="3">
    <citation type="journal article" date="2001" name="J. Immunol.">
        <title>CD43 functions as a T cell counterreceptor for the macrophage adhesion receptor sialoadhesin (Siglec-1).</title>
        <authorList>
            <person name="van den Berg T.K."/>
            <person name="Nath D."/>
            <person name="Ziltener H.J."/>
            <person name="Vestweber D."/>
            <person name="Fukuda M."/>
            <person name="van Die I."/>
            <person name="Crocker P.R."/>
        </authorList>
    </citation>
    <scope>INTERACTION WITH SIGLEC1</scope>
</reference>
<reference key="4">
    <citation type="journal article" date="2012" name="Nat. Commun.">
        <title>Quantitative maps of protein phosphorylation sites across 14 different rat organs and tissues.</title>
        <authorList>
            <person name="Lundby A."/>
            <person name="Secher A."/>
            <person name="Lage K."/>
            <person name="Nordsborg N.B."/>
            <person name="Dmytriyev A."/>
            <person name="Lundby C."/>
            <person name="Olsen J.V."/>
        </authorList>
    </citation>
    <scope>PHOSPHORYLATION [LARGE SCALE ANALYSIS] AT THR-276; SER-326; SER-330; SER-354 AND THR-361</scope>
    <scope>IDENTIFICATION BY MASS SPECTROMETRY [LARGE SCALE ANALYSIS]</scope>
</reference>
<protein>
    <recommendedName>
        <fullName>Leukosialin</fullName>
    </recommendedName>
    <alternativeName>
        <fullName>Leukocyte sialoglycoprotein</fullName>
    </alternativeName>
    <alternativeName>
        <fullName>Sialophorin</fullName>
    </alternativeName>
    <alternativeName>
        <fullName>W3/13 antigen</fullName>
    </alternativeName>
    <cdAntigenName>CD43</cdAntigenName>
    <component>
        <recommendedName>
            <fullName>CD43 cytoplasmic tail</fullName>
            <shortName>CD43-ct</shortName>
            <shortName>CD43ct</shortName>
        </recommendedName>
    </component>
</protein>
<comment type="function">
    <text evidence="1 2">Predominant cell surface sialoprotein of leukocytes which regulates multiple T-cell functions, including T-cell activation, proliferation, differentiation, trafficking and migration. Positively regulates T-cell trafficking to lymph-nodes via its association with ERM proteins (EZR, RDX and MSN). Negatively regulates Th2 cell differentiation and predisposes the differentiation of T-cells towards a Th1 lineage commitment. Promotes the expression of IFN-gamma by T-cells during T-cell receptor (TCR) activation of naive cells and induces the expression of IFN-gamma by CD4(+) T-cells and to a lesser extent by CD8(+) T-cells. Plays a role in preparing T-cells for cytokine sensing and differentiation into effector cells by inducing the expression of cytokine receptors IFNGR and IL4R, promoting IFNGR and IL4R signaling and by mediating the clustering of IFNGR with TCR. Acts as a major E-selectin ligand responsible for Th17 cell rolling on activated vasculature and recruitment during inflammation. Mediates Th17 cells, but not Th1 cells, adhesion to E-selectin. Acts as a T-cell counter-receptor for SIGLEC1.</text>
</comment>
<comment type="function">
    <molecule>CD43 cytoplasmic tail</molecule>
    <text evidence="1">Protects cells from apoptotic signals, promoting cell survival.</text>
</comment>
<comment type="subunit">
    <text evidence="5">Interacts with SIGLEC1.</text>
</comment>
<comment type="subunit">
    <molecule>CD43 cytoplasmic tail</molecule>
    <text evidence="1 2 6">Monomer (By similarity). Interacts with CTNNB1 (By similarity). Interacts with EZR, MSN and RDX (via FERM domain) (PubMed:9472040).</text>
</comment>
<comment type="subcellular location">
    <subcellularLocation>
        <location evidence="3">Membrane</location>
        <topology evidence="3">Single-pass type I membrane protein</topology>
    </subcellularLocation>
    <subcellularLocation>
        <location evidence="6">Cell projection</location>
        <location evidence="6">Microvillus</location>
    </subcellularLocation>
    <subcellularLocation>
        <location evidence="1">Cell projection</location>
        <location evidence="1">Uropodium</location>
    </subcellularLocation>
    <text evidence="1 6">Localizes to the uropodium and microvilli via its interaction with ERM proteins (EZR, RDX and MSN).</text>
</comment>
<comment type="subcellular location">
    <molecule>CD43 cytoplasmic tail</molecule>
    <subcellularLocation>
        <location evidence="1">Nucleus</location>
    </subcellularLocation>
    <subcellularLocation>
        <location evidence="1">Nucleus</location>
        <location evidence="1">PML body</location>
    </subcellularLocation>
    <text evidence="1">The sumoylated form localizes to the PML body.</text>
</comment>
<comment type="tissue specificity">
    <text>Cell surface of thymocytes, T-lymphocytes, neutrophils, plasma cells and myelomas.</text>
</comment>
<comment type="PTM">
    <text>Has a high content of sialic acid and O-linked carbohydrate structures.</text>
</comment>
<comment type="PTM">
    <text evidence="1">Phosphorylation at Ser-330 is regulated by chemokines, requires its association with ERM proteins (EZR, RDX and MSN) and is essential for its function in the regulation of T-cell trafficking to lymph nodes.</text>
</comment>
<comment type="PTM">
    <text evidence="1">Cleavage by CTSG releases its extracellular domain and triggers its intramembrane proteolysis by gamma-secretase releasing the CD43 cytoplasmic tail chain (CD43-ct) which translocates to the nucleus.</text>
</comment>
<comment type="PTM">
    <molecule>CD43 cytoplasmic tail</molecule>
    <text evidence="1">Sumoylated.</text>
</comment>
<proteinExistence type="evidence at protein level"/>
<gene>
    <name type="primary">Spn</name>
</gene>
<dbReference type="EMBL" id="Y00090">
    <property type="protein sequence ID" value="CAA68281.1"/>
    <property type="molecule type" value="mRNA"/>
</dbReference>
<dbReference type="PIR" id="S00842">
    <property type="entry name" value="S00842"/>
</dbReference>
<dbReference type="SMR" id="P13838"/>
<dbReference type="FunCoup" id="P13838">
    <property type="interactions" value="182"/>
</dbReference>
<dbReference type="STRING" id="10116.ENSRNOP00000051894"/>
<dbReference type="GlyCosmos" id="P13838">
    <property type="glycosylation" value="26 sites, No reported glycans"/>
</dbReference>
<dbReference type="GlyGen" id="P13838">
    <property type="glycosylation" value="26 sites"/>
</dbReference>
<dbReference type="iPTMnet" id="P13838"/>
<dbReference type="PhosphoSitePlus" id="P13838"/>
<dbReference type="PaxDb" id="10116-ENSRNOP00000051894"/>
<dbReference type="UCSC" id="RGD:3750">
    <property type="organism name" value="rat"/>
</dbReference>
<dbReference type="AGR" id="RGD:3750"/>
<dbReference type="RGD" id="3750">
    <property type="gene designation" value="Spn"/>
</dbReference>
<dbReference type="eggNOG" id="ENOG502SBHY">
    <property type="taxonomic scope" value="Eukaryota"/>
</dbReference>
<dbReference type="InParanoid" id="P13838"/>
<dbReference type="PhylomeDB" id="P13838"/>
<dbReference type="TreeFam" id="TF337688"/>
<dbReference type="Reactome" id="R-RNO-202733">
    <property type="pathway name" value="Cell surface interactions at the vascular wall"/>
</dbReference>
<dbReference type="Reactome" id="R-RNO-210991">
    <property type="pathway name" value="Basigin interactions"/>
</dbReference>
<dbReference type="Proteomes" id="UP000002494">
    <property type="component" value="Unplaced"/>
</dbReference>
<dbReference type="GO" id="GO:0005604">
    <property type="term" value="C:basement membrane"/>
    <property type="evidence" value="ECO:0000266"/>
    <property type="project" value="RGD"/>
</dbReference>
<dbReference type="GO" id="GO:0009986">
    <property type="term" value="C:cell surface"/>
    <property type="evidence" value="ECO:0000314"/>
    <property type="project" value="RGD"/>
</dbReference>
<dbReference type="GO" id="GO:0032154">
    <property type="term" value="C:cleavage furrow"/>
    <property type="evidence" value="ECO:0000314"/>
    <property type="project" value="RGD"/>
</dbReference>
<dbReference type="GO" id="GO:0009897">
    <property type="term" value="C:external side of plasma membrane"/>
    <property type="evidence" value="ECO:0000266"/>
    <property type="project" value="RGD"/>
</dbReference>
<dbReference type="GO" id="GO:0005615">
    <property type="term" value="C:extracellular space"/>
    <property type="evidence" value="ECO:0000266"/>
    <property type="project" value="RGD"/>
</dbReference>
<dbReference type="GO" id="GO:0005902">
    <property type="term" value="C:microvillus"/>
    <property type="evidence" value="ECO:0000314"/>
    <property type="project" value="UniProtKB"/>
</dbReference>
<dbReference type="GO" id="GO:0005886">
    <property type="term" value="C:plasma membrane"/>
    <property type="evidence" value="ECO:0000266"/>
    <property type="project" value="RGD"/>
</dbReference>
<dbReference type="GO" id="GO:0016605">
    <property type="term" value="C:PML body"/>
    <property type="evidence" value="ECO:0007669"/>
    <property type="project" value="UniProtKB-SubCell"/>
</dbReference>
<dbReference type="GO" id="GO:0001931">
    <property type="term" value="C:uropod"/>
    <property type="evidence" value="ECO:0000250"/>
    <property type="project" value="UniProtKB"/>
</dbReference>
<dbReference type="GO" id="GO:0031072">
    <property type="term" value="F:heat shock protein binding"/>
    <property type="evidence" value="ECO:0000266"/>
    <property type="project" value="RGD"/>
</dbReference>
<dbReference type="GO" id="GO:0030544">
    <property type="term" value="F:Hsp70 protein binding"/>
    <property type="evidence" value="ECO:0000266"/>
    <property type="project" value="RGD"/>
</dbReference>
<dbReference type="GO" id="GO:0019904">
    <property type="term" value="F:protein domain specific binding"/>
    <property type="evidence" value="ECO:0000353"/>
    <property type="project" value="RGD"/>
</dbReference>
<dbReference type="GO" id="GO:0004888">
    <property type="term" value="F:transmembrane signaling receptor activity"/>
    <property type="evidence" value="ECO:0007669"/>
    <property type="project" value="InterPro"/>
</dbReference>
<dbReference type="GO" id="GO:0097190">
    <property type="term" value="P:apoptotic signaling pathway"/>
    <property type="evidence" value="ECO:0000266"/>
    <property type="project" value="RGD"/>
</dbReference>
<dbReference type="GO" id="GO:0007166">
    <property type="term" value="P:cell surface receptor signaling pathway"/>
    <property type="evidence" value="ECO:0000266"/>
    <property type="project" value="RGD"/>
</dbReference>
<dbReference type="GO" id="GO:0002544">
    <property type="term" value="P:chronic inflammatory response"/>
    <property type="evidence" value="ECO:0000270"/>
    <property type="project" value="RGD"/>
</dbReference>
<dbReference type="GO" id="GO:0042742">
    <property type="term" value="P:defense response to bacterium"/>
    <property type="evidence" value="ECO:0000266"/>
    <property type="project" value="RGD"/>
</dbReference>
<dbReference type="GO" id="GO:0050901">
    <property type="term" value="P:leukocyte tethering or rolling"/>
    <property type="evidence" value="ECO:0000250"/>
    <property type="project" value="UniProtKB"/>
</dbReference>
<dbReference type="GO" id="GO:0042117">
    <property type="term" value="P:monocyte activation"/>
    <property type="evidence" value="ECO:0000270"/>
    <property type="project" value="RGD"/>
</dbReference>
<dbReference type="GO" id="GO:0007162">
    <property type="term" value="P:negative regulation of cell adhesion"/>
    <property type="evidence" value="ECO:0000266"/>
    <property type="project" value="RGD"/>
</dbReference>
<dbReference type="GO" id="GO:0050868">
    <property type="term" value="P:negative regulation of T cell activation"/>
    <property type="evidence" value="ECO:0000266"/>
    <property type="project" value="RGD"/>
</dbReference>
<dbReference type="GO" id="GO:0042130">
    <property type="term" value="P:negative regulation of T cell proliferation"/>
    <property type="evidence" value="ECO:0000250"/>
    <property type="project" value="UniProtKB"/>
</dbReference>
<dbReference type="GO" id="GO:0001808">
    <property type="term" value="P:negative regulation of type IV hypersensitivity"/>
    <property type="evidence" value="ECO:0000266"/>
    <property type="project" value="RGD"/>
</dbReference>
<dbReference type="GO" id="GO:0045060">
    <property type="term" value="P:negative thymic T cell selection"/>
    <property type="evidence" value="ECO:0000266"/>
    <property type="project" value="RGD"/>
</dbReference>
<dbReference type="GO" id="GO:2000406">
    <property type="term" value="P:positive regulation of T cell migration"/>
    <property type="evidence" value="ECO:0000250"/>
    <property type="project" value="UniProtKB"/>
</dbReference>
<dbReference type="GO" id="GO:0042102">
    <property type="term" value="P:positive regulation of T cell proliferation"/>
    <property type="evidence" value="ECO:0000266"/>
    <property type="project" value="RGD"/>
</dbReference>
<dbReference type="GO" id="GO:0032760">
    <property type="term" value="P:positive regulation of tumor necrosis factor production"/>
    <property type="evidence" value="ECO:0000266"/>
    <property type="project" value="RGD"/>
</dbReference>
<dbReference type="GO" id="GO:0050688">
    <property type="term" value="P:regulation of defense response to virus"/>
    <property type="evidence" value="ECO:0000266"/>
    <property type="project" value="RGD"/>
</dbReference>
<dbReference type="GO" id="GO:0010468">
    <property type="term" value="P:regulation of gene expression"/>
    <property type="evidence" value="ECO:0000316"/>
    <property type="project" value="ARUK-UCL"/>
</dbReference>
<dbReference type="GO" id="GO:0050776">
    <property type="term" value="P:regulation of immune response"/>
    <property type="evidence" value="ECO:0000266"/>
    <property type="project" value="RGD"/>
</dbReference>
<dbReference type="GO" id="GO:2000404">
    <property type="term" value="P:regulation of T cell migration"/>
    <property type="evidence" value="ECO:0000250"/>
    <property type="project" value="UniProtKB"/>
</dbReference>
<dbReference type="GO" id="GO:0001562">
    <property type="term" value="P:response to protozoan"/>
    <property type="evidence" value="ECO:0000266"/>
    <property type="project" value="RGD"/>
</dbReference>
<dbReference type="GO" id="GO:0031295">
    <property type="term" value="P:T cell costimulation"/>
    <property type="evidence" value="ECO:0000266"/>
    <property type="project" value="RGD"/>
</dbReference>
<dbReference type="GO" id="GO:0042098">
    <property type="term" value="P:T cell proliferation"/>
    <property type="evidence" value="ECO:0000266"/>
    <property type="project" value="RGD"/>
</dbReference>
<dbReference type="GO" id="GO:0050852">
    <property type="term" value="P:T cell receptor signaling pathway"/>
    <property type="evidence" value="ECO:0000316"/>
    <property type="project" value="ARUK-UCL"/>
</dbReference>
<dbReference type="GO" id="GO:0002296">
    <property type="term" value="P:T-helper 1 cell lineage commitment"/>
    <property type="evidence" value="ECO:0000250"/>
    <property type="project" value="UniProtKB"/>
</dbReference>
<dbReference type="GO" id="GO:0071594">
    <property type="term" value="P:thymocyte aggregation"/>
    <property type="evidence" value="ECO:0000315"/>
    <property type="project" value="RGD"/>
</dbReference>
<dbReference type="InterPro" id="IPR038829">
    <property type="entry name" value="Leukosialin"/>
</dbReference>
<dbReference type="PANTHER" id="PTHR35265">
    <property type="entry name" value="LEUKOSIALIN"/>
    <property type="match status" value="1"/>
</dbReference>
<dbReference type="PANTHER" id="PTHR35265:SF1">
    <property type="entry name" value="LEUKOSIALIN"/>
    <property type="match status" value="1"/>
</dbReference>
<feature type="signal peptide">
    <location>
        <begin position="1" status="less than"/>
        <end position="7"/>
    </location>
</feature>
<feature type="chain" id="PRO_0000021590" description="Leukosialin">
    <location>
        <begin position="8"/>
        <end position="378"/>
    </location>
</feature>
<feature type="chain" id="PRO_0000443408" description="CD43 cytoplasmic tail" evidence="1">
    <location>
        <begin position="255"/>
        <end position="378"/>
    </location>
</feature>
<feature type="topological domain" description="Extracellular" evidence="3">
    <location>
        <begin position="8"/>
        <end position="231"/>
    </location>
</feature>
<feature type="transmembrane region" description="Helical" evidence="3">
    <location>
        <begin position="232"/>
        <end position="254"/>
    </location>
</feature>
<feature type="topological domain" description="Cytoplasmic" evidence="3">
    <location>
        <begin position="255"/>
        <end position="378"/>
    </location>
</feature>
<feature type="region of interest" description="Disordered" evidence="4">
    <location>
        <begin position="13"/>
        <end position="33"/>
    </location>
</feature>
<feature type="region of interest" description="Required for interaction with EZR, MSN and RDX and for co-localization to microvilli" evidence="6">
    <location>
        <begin position="255"/>
        <end position="285"/>
    </location>
</feature>
<feature type="region of interest" description="Disordered" evidence="4">
    <location>
        <begin position="265"/>
        <end position="378"/>
    </location>
</feature>
<feature type="short sequence motif" description="Nuclear localization signal" evidence="2">
    <location>
        <begin position="259"/>
        <end position="273"/>
    </location>
</feature>
<feature type="compositionally biased region" description="Polar residues" evidence="4">
    <location>
        <begin position="310"/>
        <end position="321"/>
    </location>
</feature>
<feature type="modified residue" description="Phosphoserine" evidence="2">
    <location>
        <position position="268"/>
    </location>
</feature>
<feature type="modified residue" description="Phosphothreonine" evidence="7">
    <location>
        <position position="276"/>
    </location>
</feature>
<feature type="modified residue" description="Phosphoserine" evidence="2">
    <location>
        <position position="311"/>
    </location>
</feature>
<feature type="modified residue" description="Phosphothreonine" evidence="2">
    <location>
        <position position="316"/>
    </location>
</feature>
<feature type="modified residue" description="Phosphoserine" evidence="1">
    <location>
        <position position="322"/>
    </location>
</feature>
<feature type="modified residue" description="Phosphoserine" evidence="7">
    <location>
        <position position="326"/>
    </location>
</feature>
<feature type="modified residue" description="Phosphoserine; by PKC/PRKCQ" evidence="7">
    <location>
        <position position="330"/>
    </location>
</feature>
<feature type="modified residue" description="Phosphoserine" evidence="7">
    <location>
        <position position="354"/>
    </location>
</feature>
<feature type="modified residue" description="Phosphothreonine" evidence="7">
    <location>
        <position position="361"/>
    </location>
</feature>
<feature type="glycosylation site" description="O-linked (GalNAc...) threonine">
    <location>
        <position position="13"/>
    </location>
</feature>
<feature type="glycosylation site" description="O-linked (GalNAc...) threonine">
    <location>
        <position position="15"/>
    </location>
</feature>
<feature type="glycosylation site" description="O-linked (GalNAc...) threonine">
    <location>
        <position position="20"/>
    </location>
</feature>
<feature type="glycosylation site" description="O-linked (GalNAc...) serine">
    <location>
        <position position="23"/>
    </location>
</feature>
<feature type="glycosylation site" description="O-linked (GalNAc...) serine">
    <location>
        <position position="25"/>
    </location>
</feature>
<feature type="glycosylation site" description="O-linked (GalNAc...) serine">
    <location>
        <position position="27"/>
    </location>
</feature>
<feature type="glycosylation site" description="O-linked (GalNAc...) threonine">
    <location>
        <position position="28"/>
    </location>
</feature>
<feature type="glycosylation site" description="O-linked (GalNAc...) serine">
    <location>
        <position position="29"/>
    </location>
</feature>
<feature type="glycosylation site" description="O-linked (GalNAc...) serine">
    <location>
        <position position="33"/>
    </location>
</feature>
<feature type="glycosylation site" description="O-linked (GalNAc...) threonine">
    <location>
        <position position="34"/>
    </location>
</feature>
<feature type="glycosylation site" description="O-linked (GalNAc...) serine">
    <location>
        <position position="36"/>
    </location>
</feature>
<feature type="glycosylation site" description="O-linked (GalNAc...) serine">
    <location>
        <position position="37"/>
    </location>
</feature>
<feature type="glycosylation site" description="O-linked (GalNAc...) threonine">
    <location>
        <position position="40"/>
    </location>
</feature>
<feature type="glycosylation site" description="O-linked (GalNAc...) serine">
    <location>
        <position position="108"/>
    </location>
</feature>
<feature type="glycosylation site" description="O-linked (GalNAc...) serine">
    <location>
        <position position="113"/>
    </location>
</feature>
<feature type="glycosylation site" description="O-linked (GalNAc...) threonine" evidence="3">
    <location>
        <position position="118"/>
    </location>
</feature>
<feature type="glycosylation site" description="O-linked (GalNAc...) threonine">
    <location>
        <position position="120"/>
    </location>
</feature>
<feature type="glycosylation site" description="O-linked (GalNAc...) threonine">
    <location>
        <position position="124"/>
    </location>
</feature>
<feature type="glycosylation site" description="O-linked (GalNAc...) serine">
    <location>
        <position position="125"/>
    </location>
</feature>
<feature type="glycosylation site" description="O-linked (GalNAc...) serine">
    <location>
        <position position="126"/>
    </location>
</feature>
<feature type="glycosylation site" description="O-linked (GalNAc...) threonine">
    <location>
        <position position="174"/>
    </location>
</feature>
<feature type="glycosylation site" description="O-linked (GalNAc...) serine">
    <location>
        <position position="176"/>
    </location>
</feature>
<feature type="glycosylation site" description="O-linked (GalNAc...) serine">
    <location>
        <position position="180"/>
    </location>
</feature>
<feature type="glycosylation site" description="O-linked (GalNAc...) threonine" evidence="3">
    <location>
        <position position="183"/>
    </location>
</feature>
<feature type="glycosylation site" description="O-linked (GalNAc...) serine">
    <location>
        <position position="187"/>
    </location>
</feature>
<feature type="glycosylation site" description="O-linked (GalNAc...) threonine">
    <location>
        <position position="189"/>
    </location>
</feature>
<feature type="mutagenesis site" description="Loss of interaction with EZR, MSN and RDX and co-localization to microvilli." evidence="6">
    <original>KRR</original>
    <variation>NGG</variation>
    <location>
        <begin position="259"/>
        <end position="261"/>
    </location>
</feature>
<feature type="non-terminal residue">
    <location>
        <position position="1"/>
    </location>
</feature>
<accession>P13838</accession>